<protein>
    <recommendedName>
        <fullName evidence="1">ATP synthase subunit alpha</fullName>
        <ecNumber evidence="1">7.1.2.2</ecNumber>
    </recommendedName>
    <alternativeName>
        <fullName evidence="1">ATP synthase F1 sector subunit alpha</fullName>
    </alternativeName>
    <alternativeName>
        <fullName evidence="1">F-ATPase subunit alpha</fullName>
    </alternativeName>
</protein>
<keyword id="KW-0066">ATP synthesis</keyword>
<keyword id="KW-0067">ATP-binding</keyword>
<keyword id="KW-1003">Cell membrane</keyword>
<keyword id="KW-0139">CF(1)</keyword>
<keyword id="KW-0375">Hydrogen ion transport</keyword>
<keyword id="KW-0406">Ion transport</keyword>
<keyword id="KW-0472">Membrane</keyword>
<keyword id="KW-0547">Nucleotide-binding</keyword>
<keyword id="KW-1278">Translocase</keyword>
<keyword id="KW-0813">Transport</keyword>
<proteinExistence type="inferred from homology"/>
<gene>
    <name evidence="1" type="primary">atpA</name>
    <name type="ordered locus">SAB1989c</name>
</gene>
<feature type="chain" id="PRO_0000238357" description="ATP synthase subunit alpha">
    <location>
        <begin position="1"/>
        <end position="502"/>
    </location>
</feature>
<feature type="binding site" evidence="1">
    <location>
        <begin position="169"/>
        <end position="176"/>
    </location>
    <ligand>
        <name>ATP</name>
        <dbReference type="ChEBI" id="CHEBI:30616"/>
    </ligand>
</feature>
<feature type="site" description="Required for activity" evidence="1">
    <location>
        <position position="362"/>
    </location>
</feature>
<comment type="function">
    <text evidence="1">Produces ATP from ADP in the presence of a proton gradient across the membrane. The alpha chain is a regulatory subunit.</text>
</comment>
<comment type="catalytic activity">
    <reaction evidence="1">
        <text>ATP + H2O + 4 H(+)(in) = ADP + phosphate + 5 H(+)(out)</text>
        <dbReference type="Rhea" id="RHEA:57720"/>
        <dbReference type="ChEBI" id="CHEBI:15377"/>
        <dbReference type="ChEBI" id="CHEBI:15378"/>
        <dbReference type="ChEBI" id="CHEBI:30616"/>
        <dbReference type="ChEBI" id="CHEBI:43474"/>
        <dbReference type="ChEBI" id="CHEBI:456216"/>
        <dbReference type="EC" id="7.1.2.2"/>
    </reaction>
</comment>
<comment type="subunit">
    <text evidence="1">F-type ATPases have 2 components, CF(1) - the catalytic core - and CF(0) - the membrane proton channel. CF(1) has five subunits: alpha(3), beta(3), gamma(1), delta(1), epsilon(1). CF(0) has three main subunits: a(1), b(2) and c(9-12). The alpha and beta chains form an alternating ring which encloses part of the gamma chain. CF(1) is attached to CF(0) by a central stalk formed by the gamma and epsilon chains, while a peripheral stalk is formed by the delta and b chains.</text>
</comment>
<comment type="subcellular location">
    <subcellularLocation>
        <location evidence="1">Cell membrane</location>
        <topology evidence="1">Peripheral membrane protein</topology>
    </subcellularLocation>
</comment>
<comment type="similarity">
    <text evidence="1">Belongs to the ATPase alpha/beta chains family.</text>
</comment>
<dbReference type="EC" id="7.1.2.2" evidence="1"/>
<dbReference type="EMBL" id="AJ938182">
    <property type="protein sequence ID" value="CAI81678.1"/>
    <property type="molecule type" value="Genomic_DNA"/>
</dbReference>
<dbReference type="RefSeq" id="WP_000974877.1">
    <property type="nucleotide sequence ID" value="NC_007622.1"/>
</dbReference>
<dbReference type="SMR" id="Q2YUJ9"/>
<dbReference type="KEGG" id="sab:SAB1989c"/>
<dbReference type="HOGENOM" id="CLU_010091_2_1_9"/>
<dbReference type="GO" id="GO:0005886">
    <property type="term" value="C:plasma membrane"/>
    <property type="evidence" value="ECO:0007669"/>
    <property type="project" value="UniProtKB-SubCell"/>
</dbReference>
<dbReference type="GO" id="GO:0045259">
    <property type="term" value="C:proton-transporting ATP synthase complex"/>
    <property type="evidence" value="ECO:0007669"/>
    <property type="project" value="UniProtKB-KW"/>
</dbReference>
<dbReference type="GO" id="GO:0043531">
    <property type="term" value="F:ADP binding"/>
    <property type="evidence" value="ECO:0007669"/>
    <property type="project" value="TreeGrafter"/>
</dbReference>
<dbReference type="GO" id="GO:0005524">
    <property type="term" value="F:ATP binding"/>
    <property type="evidence" value="ECO:0007669"/>
    <property type="project" value="UniProtKB-UniRule"/>
</dbReference>
<dbReference type="GO" id="GO:0046933">
    <property type="term" value="F:proton-transporting ATP synthase activity, rotational mechanism"/>
    <property type="evidence" value="ECO:0007669"/>
    <property type="project" value="UniProtKB-UniRule"/>
</dbReference>
<dbReference type="CDD" id="cd18113">
    <property type="entry name" value="ATP-synt_F1_alpha_C"/>
    <property type="match status" value="1"/>
</dbReference>
<dbReference type="CDD" id="cd18116">
    <property type="entry name" value="ATP-synt_F1_alpha_N"/>
    <property type="match status" value="1"/>
</dbReference>
<dbReference type="CDD" id="cd01132">
    <property type="entry name" value="F1-ATPase_alpha_CD"/>
    <property type="match status" value="1"/>
</dbReference>
<dbReference type="FunFam" id="1.20.150.20:FF:000001">
    <property type="entry name" value="ATP synthase subunit alpha"/>
    <property type="match status" value="1"/>
</dbReference>
<dbReference type="FunFam" id="2.40.30.20:FF:000001">
    <property type="entry name" value="ATP synthase subunit alpha"/>
    <property type="match status" value="1"/>
</dbReference>
<dbReference type="FunFam" id="3.40.50.300:FF:000002">
    <property type="entry name" value="ATP synthase subunit alpha"/>
    <property type="match status" value="1"/>
</dbReference>
<dbReference type="Gene3D" id="2.40.30.20">
    <property type="match status" value="1"/>
</dbReference>
<dbReference type="Gene3D" id="1.20.150.20">
    <property type="entry name" value="ATP synthase alpha/beta chain, C-terminal domain"/>
    <property type="match status" value="1"/>
</dbReference>
<dbReference type="Gene3D" id="3.40.50.300">
    <property type="entry name" value="P-loop containing nucleotide triphosphate hydrolases"/>
    <property type="match status" value="1"/>
</dbReference>
<dbReference type="HAMAP" id="MF_01346">
    <property type="entry name" value="ATP_synth_alpha_bact"/>
    <property type="match status" value="1"/>
</dbReference>
<dbReference type="InterPro" id="IPR023366">
    <property type="entry name" value="ATP_synth_asu-like_sf"/>
</dbReference>
<dbReference type="InterPro" id="IPR000793">
    <property type="entry name" value="ATP_synth_asu_C"/>
</dbReference>
<dbReference type="InterPro" id="IPR038376">
    <property type="entry name" value="ATP_synth_asu_C_sf"/>
</dbReference>
<dbReference type="InterPro" id="IPR033732">
    <property type="entry name" value="ATP_synth_F1_a_nt-bd_dom"/>
</dbReference>
<dbReference type="InterPro" id="IPR005294">
    <property type="entry name" value="ATP_synth_F1_asu"/>
</dbReference>
<dbReference type="InterPro" id="IPR020003">
    <property type="entry name" value="ATPase_a/bsu_AS"/>
</dbReference>
<dbReference type="InterPro" id="IPR004100">
    <property type="entry name" value="ATPase_F1/V1/A1_a/bsu_N"/>
</dbReference>
<dbReference type="InterPro" id="IPR036121">
    <property type="entry name" value="ATPase_F1/V1/A1_a/bsu_N_sf"/>
</dbReference>
<dbReference type="InterPro" id="IPR000194">
    <property type="entry name" value="ATPase_F1/V1/A1_a/bsu_nucl-bd"/>
</dbReference>
<dbReference type="InterPro" id="IPR027417">
    <property type="entry name" value="P-loop_NTPase"/>
</dbReference>
<dbReference type="NCBIfam" id="TIGR00962">
    <property type="entry name" value="atpA"/>
    <property type="match status" value="1"/>
</dbReference>
<dbReference type="NCBIfam" id="NF009884">
    <property type="entry name" value="PRK13343.1"/>
    <property type="match status" value="1"/>
</dbReference>
<dbReference type="PANTHER" id="PTHR48082">
    <property type="entry name" value="ATP SYNTHASE SUBUNIT ALPHA, MITOCHONDRIAL"/>
    <property type="match status" value="1"/>
</dbReference>
<dbReference type="PANTHER" id="PTHR48082:SF2">
    <property type="entry name" value="ATP SYNTHASE SUBUNIT ALPHA, MITOCHONDRIAL"/>
    <property type="match status" value="1"/>
</dbReference>
<dbReference type="Pfam" id="PF00006">
    <property type="entry name" value="ATP-synt_ab"/>
    <property type="match status" value="1"/>
</dbReference>
<dbReference type="Pfam" id="PF00306">
    <property type="entry name" value="ATP-synt_ab_C"/>
    <property type="match status" value="1"/>
</dbReference>
<dbReference type="Pfam" id="PF02874">
    <property type="entry name" value="ATP-synt_ab_N"/>
    <property type="match status" value="1"/>
</dbReference>
<dbReference type="PIRSF" id="PIRSF039088">
    <property type="entry name" value="F_ATPase_subunit_alpha"/>
    <property type="match status" value="1"/>
</dbReference>
<dbReference type="SUPFAM" id="SSF47917">
    <property type="entry name" value="C-terminal domain of alpha and beta subunits of F1 ATP synthase"/>
    <property type="match status" value="1"/>
</dbReference>
<dbReference type="SUPFAM" id="SSF50615">
    <property type="entry name" value="N-terminal domain of alpha and beta subunits of F1 ATP synthase"/>
    <property type="match status" value="1"/>
</dbReference>
<dbReference type="SUPFAM" id="SSF52540">
    <property type="entry name" value="P-loop containing nucleoside triphosphate hydrolases"/>
    <property type="match status" value="1"/>
</dbReference>
<dbReference type="PROSITE" id="PS00152">
    <property type="entry name" value="ATPASE_ALPHA_BETA"/>
    <property type="match status" value="1"/>
</dbReference>
<organism>
    <name type="scientific">Staphylococcus aureus (strain bovine RF122 / ET3-1)</name>
    <dbReference type="NCBI Taxonomy" id="273036"/>
    <lineage>
        <taxon>Bacteria</taxon>
        <taxon>Bacillati</taxon>
        <taxon>Bacillota</taxon>
        <taxon>Bacilli</taxon>
        <taxon>Bacillales</taxon>
        <taxon>Staphylococcaceae</taxon>
        <taxon>Staphylococcus</taxon>
    </lineage>
</organism>
<sequence>MAIKAEEISALLRSQIENYESEMSVTDVGTVLQIGDGIALIHGLNDVMAGELVEFHNGVLGLAQNLEESNVGVVILGPYAGITEGDEVKRTGRIMEVPVGEELIGRVVNPLGQPIDGQGPINTTKTRPVEKKATGVMDRKSVDEPLQTGIKAIDALVPIGRGQRELIIGDRQTGKTTIAIDTILNQKDQGTICIYVAIGQKDSTVRANVEKLRQAGALDYTIVVAASASEPSPLLYIAPYSGVTMGEEFMFNGKHVLIVYDDLTKQAAAYRELSLLLRRPPGREAYPGDVFYLHSRLLERAAKLNDDLGGGSITALPIIETQAGDISAYVPTNVISITDGQIFLQSDLFFSGVRPAINAGQSVSRVGGSAQIKAMKKVAGTLRLDLASYRELESFAQFGSDLDEFTASKLERGKRTVEVLKQDQNKPLPVEHQVLIIYALTKGYLDDIPVVDITRFEDELNHWAESNATELLNEIRETGGLPDAEKFDTAINEFKKSFSKSE</sequence>
<accession>Q2YUJ9</accession>
<reference key="1">
    <citation type="journal article" date="2007" name="PLoS ONE">
        <title>Molecular correlates of host specialization in Staphylococcus aureus.</title>
        <authorList>
            <person name="Herron-Olson L."/>
            <person name="Fitzgerald J.R."/>
            <person name="Musser J.M."/>
            <person name="Kapur V."/>
        </authorList>
    </citation>
    <scope>NUCLEOTIDE SEQUENCE [LARGE SCALE GENOMIC DNA]</scope>
    <source>
        <strain>bovine RF122 / ET3-1</strain>
    </source>
</reference>
<name>ATPA_STAAB</name>
<evidence type="ECO:0000255" key="1">
    <source>
        <dbReference type="HAMAP-Rule" id="MF_01346"/>
    </source>
</evidence>